<protein>
    <recommendedName>
        <fullName evidence="1">Nicotinate phosphoribosyltransferase</fullName>
        <shortName evidence="1">NAPRTase</shortName>
        <ecNumber evidence="1">6.3.4.21</ecNumber>
    </recommendedName>
</protein>
<evidence type="ECO:0000255" key="1">
    <source>
        <dbReference type="HAMAP-Rule" id="MF_00570"/>
    </source>
</evidence>
<organism>
    <name type="scientific">Chromobacterium violaceum (strain ATCC 12472 / DSM 30191 / JCM 1249 / CCUG 213 / NBRC 12614 / NCIMB 9131 / NCTC 9757 / MK)</name>
    <dbReference type="NCBI Taxonomy" id="243365"/>
    <lineage>
        <taxon>Bacteria</taxon>
        <taxon>Pseudomonadati</taxon>
        <taxon>Pseudomonadota</taxon>
        <taxon>Betaproteobacteria</taxon>
        <taxon>Neisseriales</taxon>
        <taxon>Chromobacteriaceae</taxon>
        <taxon>Chromobacterium</taxon>
    </lineage>
</organism>
<dbReference type="EC" id="6.3.4.21" evidence="1"/>
<dbReference type="EMBL" id="AE016825">
    <property type="protein sequence ID" value="AAQ61085.1"/>
    <property type="molecule type" value="Genomic_DNA"/>
</dbReference>
<dbReference type="RefSeq" id="WP_011136969.1">
    <property type="nucleotide sequence ID" value="NC_005085.1"/>
</dbReference>
<dbReference type="SMR" id="Q7NSK2"/>
<dbReference type="STRING" id="243365.CV_3422"/>
<dbReference type="KEGG" id="cvi:CV_3422"/>
<dbReference type="eggNOG" id="COG1488">
    <property type="taxonomic scope" value="Bacteria"/>
</dbReference>
<dbReference type="HOGENOM" id="CLU_030991_1_0_4"/>
<dbReference type="OrthoDB" id="9771406at2"/>
<dbReference type="UniPathway" id="UPA00253">
    <property type="reaction ID" value="UER00457"/>
</dbReference>
<dbReference type="Proteomes" id="UP000001424">
    <property type="component" value="Chromosome"/>
</dbReference>
<dbReference type="GO" id="GO:0005829">
    <property type="term" value="C:cytosol"/>
    <property type="evidence" value="ECO:0007669"/>
    <property type="project" value="TreeGrafter"/>
</dbReference>
<dbReference type="GO" id="GO:0004516">
    <property type="term" value="F:nicotinate phosphoribosyltransferase activity"/>
    <property type="evidence" value="ECO:0007669"/>
    <property type="project" value="UniProtKB-UniRule"/>
</dbReference>
<dbReference type="GO" id="GO:0034355">
    <property type="term" value="P:NAD biosynthetic process via the salvage pathway"/>
    <property type="evidence" value="ECO:0007669"/>
    <property type="project" value="TreeGrafter"/>
</dbReference>
<dbReference type="CDD" id="cd01401">
    <property type="entry name" value="PncB_like"/>
    <property type="match status" value="1"/>
</dbReference>
<dbReference type="Gene3D" id="3.20.140.10">
    <property type="entry name" value="nicotinate phosphoribosyltransferase"/>
    <property type="match status" value="1"/>
</dbReference>
<dbReference type="HAMAP" id="MF_00570">
    <property type="entry name" value="NAPRTase"/>
    <property type="match status" value="1"/>
</dbReference>
<dbReference type="InterPro" id="IPR041525">
    <property type="entry name" value="N/Namide_PRibTrfase"/>
</dbReference>
<dbReference type="InterPro" id="IPR040727">
    <property type="entry name" value="NAPRTase_N"/>
</dbReference>
<dbReference type="InterPro" id="IPR006406">
    <property type="entry name" value="Nic_PRibTrfase"/>
</dbReference>
<dbReference type="InterPro" id="IPR007229">
    <property type="entry name" value="Nic_PRibTrfase-Fam"/>
</dbReference>
<dbReference type="InterPro" id="IPR036068">
    <property type="entry name" value="Nicotinate_pribotase-like_C"/>
</dbReference>
<dbReference type="NCBIfam" id="TIGR01514">
    <property type="entry name" value="NAPRTase"/>
    <property type="match status" value="1"/>
</dbReference>
<dbReference type="NCBIfam" id="NF003704">
    <property type="entry name" value="PRK05321.1"/>
    <property type="match status" value="1"/>
</dbReference>
<dbReference type="PANTHER" id="PTHR11098">
    <property type="entry name" value="NICOTINATE PHOSPHORIBOSYLTRANSFERASE"/>
    <property type="match status" value="1"/>
</dbReference>
<dbReference type="PANTHER" id="PTHR11098:SF1">
    <property type="entry name" value="NICOTINATE PHOSPHORIBOSYLTRANSFERASE"/>
    <property type="match status" value="1"/>
</dbReference>
<dbReference type="Pfam" id="PF04095">
    <property type="entry name" value="NAPRTase"/>
    <property type="match status" value="1"/>
</dbReference>
<dbReference type="Pfam" id="PF17767">
    <property type="entry name" value="NAPRTase_N"/>
    <property type="match status" value="1"/>
</dbReference>
<dbReference type="PIRSF" id="PIRSF000484">
    <property type="entry name" value="NAPRT"/>
    <property type="match status" value="1"/>
</dbReference>
<dbReference type="SUPFAM" id="SSF51690">
    <property type="entry name" value="Nicotinate/Quinolinate PRTase C-terminal domain-like"/>
    <property type="match status" value="1"/>
</dbReference>
<dbReference type="SUPFAM" id="SSF54675">
    <property type="entry name" value="Nicotinate/Quinolinate PRTase N-terminal domain-like"/>
    <property type="match status" value="1"/>
</dbReference>
<proteinExistence type="inferred from homology"/>
<comment type="function">
    <text evidence="1">Catalyzes the synthesis of beta-nicotinate D-ribonucleotide from nicotinate and 5-phospho-D-ribose 1-phosphate at the expense of ATP.</text>
</comment>
<comment type="catalytic activity">
    <reaction evidence="1">
        <text>nicotinate + 5-phospho-alpha-D-ribose 1-diphosphate + ATP + H2O = nicotinate beta-D-ribonucleotide + ADP + phosphate + diphosphate</text>
        <dbReference type="Rhea" id="RHEA:36163"/>
        <dbReference type="ChEBI" id="CHEBI:15377"/>
        <dbReference type="ChEBI" id="CHEBI:30616"/>
        <dbReference type="ChEBI" id="CHEBI:32544"/>
        <dbReference type="ChEBI" id="CHEBI:33019"/>
        <dbReference type="ChEBI" id="CHEBI:43474"/>
        <dbReference type="ChEBI" id="CHEBI:57502"/>
        <dbReference type="ChEBI" id="CHEBI:58017"/>
        <dbReference type="ChEBI" id="CHEBI:456216"/>
        <dbReference type="EC" id="6.3.4.21"/>
    </reaction>
</comment>
<comment type="pathway">
    <text evidence="1">Cofactor biosynthesis; NAD(+) biosynthesis; nicotinate D-ribonucleotide from nicotinate: step 1/1.</text>
</comment>
<comment type="PTM">
    <text evidence="1">Transiently phosphorylated on a His residue during the reaction cycle. Phosphorylation strongly increases the affinity for substrates and increases the rate of nicotinate D-ribonucleotide production. Dephosphorylation regenerates the low-affinity form of the enzyme, leading to product release.</text>
</comment>
<comment type="similarity">
    <text evidence="1">Belongs to the NAPRTase family.</text>
</comment>
<reference key="1">
    <citation type="journal article" date="2003" name="Proc. Natl. Acad. Sci. U.S.A.">
        <title>The complete genome sequence of Chromobacterium violaceum reveals remarkable and exploitable bacterial adaptability.</title>
        <authorList>
            <person name="Vasconcelos A.T.R."/>
            <person name="de Almeida D.F."/>
            <person name="Hungria M."/>
            <person name="Guimaraes C.T."/>
            <person name="Antonio R.V."/>
            <person name="Almeida F.C."/>
            <person name="de Almeida L.G.P."/>
            <person name="de Almeida R."/>
            <person name="Alves-Gomes J.A."/>
            <person name="Andrade E.M."/>
            <person name="Araripe J."/>
            <person name="de Araujo M.F.F."/>
            <person name="Astolfi-Filho S."/>
            <person name="Azevedo V."/>
            <person name="Baptista A.J."/>
            <person name="Bataus L.A.M."/>
            <person name="Batista J.S."/>
            <person name="Belo A."/>
            <person name="van den Berg C."/>
            <person name="Bogo M."/>
            <person name="Bonatto S."/>
            <person name="Bordignon J."/>
            <person name="Brigido M.M."/>
            <person name="Brito C.A."/>
            <person name="Brocchi M."/>
            <person name="Burity H.A."/>
            <person name="Camargo A.A."/>
            <person name="Cardoso D.D.P."/>
            <person name="Carneiro N.P."/>
            <person name="Carraro D.M."/>
            <person name="Carvalho C.M.B."/>
            <person name="Cascardo J.C.M."/>
            <person name="Cavada B.S."/>
            <person name="Chueire L.M.O."/>
            <person name="Creczynski-Pasa T.B."/>
            <person name="Cunha-Junior N.C."/>
            <person name="Fagundes N."/>
            <person name="Falcao C.L."/>
            <person name="Fantinatti F."/>
            <person name="Farias I.P."/>
            <person name="Felipe M.S.S."/>
            <person name="Ferrari L.P."/>
            <person name="Ferro J.A."/>
            <person name="Ferro M.I.T."/>
            <person name="Franco G.R."/>
            <person name="Freitas N.S.A."/>
            <person name="Furlan L.R."/>
            <person name="Gazzinelli R.T."/>
            <person name="Gomes E.A."/>
            <person name="Goncalves P.R."/>
            <person name="Grangeiro T.B."/>
            <person name="Grattapaglia D."/>
            <person name="Grisard E.C."/>
            <person name="Hanna E.S."/>
            <person name="Jardim S.N."/>
            <person name="Laurino J."/>
            <person name="Leoi L.C.T."/>
            <person name="Lima L.F.A."/>
            <person name="Loureiro M.F."/>
            <person name="Lyra M.C.C.P."/>
            <person name="Madeira H.M.F."/>
            <person name="Manfio G.P."/>
            <person name="Maranhao A.Q."/>
            <person name="Martins W.S."/>
            <person name="di Mauro S.M.Z."/>
            <person name="de Medeiros S.R.B."/>
            <person name="Meissner R.V."/>
            <person name="Moreira M.A.M."/>
            <person name="Nascimento F.F."/>
            <person name="Nicolas M.F."/>
            <person name="Oliveira J.G."/>
            <person name="Oliveira S.C."/>
            <person name="Paixao R.F.C."/>
            <person name="Parente J.A."/>
            <person name="Pedrosa F.O."/>
            <person name="Pena S.D.J."/>
            <person name="Pereira J.O."/>
            <person name="Pereira M."/>
            <person name="Pinto L.S.R.C."/>
            <person name="Pinto L.S."/>
            <person name="Porto J.I.R."/>
            <person name="Potrich D.P."/>
            <person name="Ramalho-Neto C.E."/>
            <person name="Reis A.M.M."/>
            <person name="Rigo L.U."/>
            <person name="Rondinelli E."/>
            <person name="Santos E.B.P."/>
            <person name="Santos F.R."/>
            <person name="Schneider M.P.C."/>
            <person name="Seuanez H.N."/>
            <person name="Silva A.M.R."/>
            <person name="da Silva A.L.C."/>
            <person name="Silva D.W."/>
            <person name="Silva R."/>
            <person name="Simoes I.C."/>
            <person name="Simon D."/>
            <person name="Soares C.M.A."/>
            <person name="Soares R.B.A."/>
            <person name="Souza E.M."/>
            <person name="Souza K.R.L."/>
            <person name="Souza R.C."/>
            <person name="Steffens M.B.R."/>
            <person name="Steindel M."/>
            <person name="Teixeira S.R."/>
            <person name="Urmenyi T."/>
            <person name="Vettore A."/>
            <person name="Wassem R."/>
            <person name="Zaha A."/>
            <person name="Simpson A.J.G."/>
        </authorList>
    </citation>
    <scope>NUCLEOTIDE SEQUENCE [LARGE SCALE GENOMIC DNA]</scope>
    <source>
        <strain>ATCC 12472 / DSM 30191 / JCM 1249 / CCUG 213 / NBRC 12614 / NCIMB 9131 / NCTC 9757 / MK</strain>
    </source>
</reference>
<name>PNCB_CHRVO</name>
<accession>Q7NSK2</accession>
<feature type="chain" id="PRO_0000205827" description="Nicotinate phosphoribosyltransferase">
    <location>
        <begin position="1"/>
        <end position="402"/>
    </location>
</feature>
<feature type="modified residue" description="Phosphohistidine; by autocatalysis" evidence="1">
    <location>
        <position position="226"/>
    </location>
</feature>
<sequence length="402" mass="46340">MPKNTPIIRSLLDTDLYKFTMLQVVLHQFPAAHGEYEFRCRNHPDTPLTQLKQQLETQLDLLCELRFSQDELDYLRGLRFIKSDYVDYLELFHLQRRFISVSEEGEQLAIRIKGPMVQAMFFEIFVLAIVNELYFRPLDSKAVREEGRRRLEAKLAELERFQREEAPGQRFPLLIADFGTRRRFSRDWQAHVVERLNHALPQVFRGTSNVYLARKLGITPIGTMAHEFFQAFQALGVRLRDFQKAALESWVQEYRGDLGIALTDVVGMDAFLADFDLYFAKLFDGLRHDSGDPYIWGEKAIAHYRKLRIDPATKMLTFSDGLSVDSALQLQRHFSPHIQVSFGIGTHFTNDMGLEPLQIVLKLVSCNGQPVAKLSDSPGKTMCSDETFLAYLRQVFKVPALA</sequence>
<keyword id="KW-0436">Ligase</keyword>
<keyword id="KW-0597">Phosphoprotein</keyword>
<keyword id="KW-0662">Pyridine nucleotide biosynthesis</keyword>
<keyword id="KW-1185">Reference proteome</keyword>
<gene>
    <name evidence="1" type="primary">pncB</name>
    <name type="ordered locus">CV_3422</name>
</gene>